<dbReference type="EMBL" id="U49645">
    <property type="protein sequence ID" value="AAA98645.1"/>
    <property type="molecule type" value="mRNA"/>
</dbReference>
<dbReference type="SMR" id="Q91284"/>
<dbReference type="GO" id="GO:0005634">
    <property type="term" value="C:nucleus"/>
    <property type="evidence" value="ECO:0007669"/>
    <property type="project" value="UniProtKB-SubCell"/>
</dbReference>
<dbReference type="GO" id="GO:0000981">
    <property type="term" value="F:DNA-binding transcription factor activity, RNA polymerase II-specific"/>
    <property type="evidence" value="ECO:0007669"/>
    <property type="project" value="InterPro"/>
</dbReference>
<dbReference type="GO" id="GO:0000978">
    <property type="term" value="F:RNA polymerase II cis-regulatory region sequence-specific DNA binding"/>
    <property type="evidence" value="ECO:0007669"/>
    <property type="project" value="TreeGrafter"/>
</dbReference>
<dbReference type="GO" id="GO:0030855">
    <property type="term" value="P:epithelial cell differentiation"/>
    <property type="evidence" value="ECO:0007669"/>
    <property type="project" value="TreeGrafter"/>
</dbReference>
<dbReference type="CDD" id="cd00086">
    <property type="entry name" value="homeodomain"/>
    <property type="match status" value="1"/>
</dbReference>
<dbReference type="FunFam" id="1.10.10.60:FF:000048">
    <property type="entry name" value="Distal-less homeobox 2"/>
    <property type="match status" value="1"/>
</dbReference>
<dbReference type="Gene3D" id="1.10.10.60">
    <property type="entry name" value="Homeodomain-like"/>
    <property type="match status" value="1"/>
</dbReference>
<dbReference type="InterPro" id="IPR050460">
    <property type="entry name" value="Distal-less_Homeobox_TF"/>
</dbReference>
<dbReference type="InterPro" id="IPR022135">
    <property type="entry name" value="Distal-less_N"/>
</dbReference>
<dbReference type="InterPro" id="IPR001356">
    <property type="entry name" value="HD"/>
</dbReference>
<dbReference type="InterPro" id="IPR020479">
    <property type="entry name" value="HD_metazoa"/>
</dbReference>
<dbReference type="InterPro" id="IPR017970">
    <property type="entry name" value="Homeobox_CS"/>
</dbReference>
<dbReference type="InterPro" id="IPR009057">
    <property type="entry name" value="Homeodomain-like_sf"/>
</dbReference>
<dbReference type="InterPro" id="IPR000047">
    <property type="entry name" value="HTH_motif"/>
</dbReference>
<dbReference type="PANTHER" id="PTHR24327">
    <property type="entry name" value="HOMEOBOX PROTEIN"/>
    <property type="match status" value="1"/>
</dbReference>
<dbReference type="PANTHER" id="PTHR24327:SF28">
    <property type="entry name" value="HOMEOBOX PROTEIN DLX-3"/>
    <property type="match status" value="1"/>
</dbReference>
<dbReference type="Pfam" id="PF12413">
    <property type="entry name" value="DLL_N"/>
    <property type="match status" value="1"/>
</dbReference>
<dbReference type="Pfam" id="PF00046">
    <property type="entry name" value="Homeodomain"/>
    <property type="match status" value="1"/>
</dbReference>
<dbReference type="PRINTS" id="PR00024">
    <property type="entry name" value="HOMEOBOX"/>
</dbReference>
<dbReference type="PRINTS" id="PR00031">
    <property type="entry name" value="HTHREPRESSR"/>
</dbReference>
<dbReference type="SMART" id="SM00389">
    <property type="entry name" value="HOX"/>
    <property type="match status" value="1"/>
</dbReference>
<dbReference type="SUPFAM" id="SSF46689">
    <property type="entry name" value="Homeodomain-like"/>
    <property type="match status" value="1"/>
</dbReference>
<dbReference type="PROSITE" id="PS00027">
    <property type="entry name" value="HOMEOBOX_1"/>
    <property type="match status" value="1"/>
</dbReference>
<dbReference type="PROSITE" id="PS50071">
    <property type="entry name" value="HOMEOBOX_2"/>
    <property type="match status" value="1"/>
</dbReference>
<proteinExistence type="evidence at transcript level"/>
<feature type="chain" id="PRO_0000049044" description="Distal-less-like protein DLX-3">
    <location>
        <begin position="1"/>
        <end position="274"/>
    </location>
</feature>
<feature type="DNA-binding region" description="Homeobox" evidence="1">
    <location>
        <begin position="126"/>
        <end position="185"/>
    </location>
</feature>
<feature type="region of interest" description="Disordered" evidence="2">
    <location>
        <begin position="189"/>
        <end position="274"/>
    </location>
</feature>
<feature type="compositionally biased region" description="Polar residues" evidence="2">
    <location>
        <begin position="199"/>
        <end position="220"/>
    </location>
</feature>
<feature type="compositionally biased region" description="Low complexity" evidence="2">
    <location>
        <begin position="259"/>
        <end position="274"/>
    </location>
</feature>
<comment type="subcellular location">
    <subcellularLocation>
        <location evidence="1">Nucleus</location>
    </subcellularLocation>
</comment>
<comment type="developmental stage">
    <text>Expressed in the regenerating spinal cord but not in the adult one.</text>
</comment>
<comment type="similarity">
    <text evidence="3">Belongs to the distal-less homeobox family.</text>
</comment>
<sequence>MTTILTDLSSSLSCHAASKDSPTLPESSATDLGYYSAHAGTHSPHDYFQSQPYSQPISHYPYHQFNLNGLGGPGTYSPKSEYPYGGGGYRQYGHYREPAMAVQEPVTVKEEPEPEVRMVNGKPKKIRKPRTIYSSYQLAALQRRFQKAQYLALPERAELAAQLGLTQTQVKIWFQNRRSKFKKLYKNGEVPGMEHSPDNSDSMACNSPASPTVWDNNTPSRAHDPQAQPLPHNSSPSYLEDYNPWYHHPQNLSGPHLQPPGTMHHTPPGTGAVY</sequence>
<keyword id="KW-0217">Developmental protein</keyword>
<keyword id="KW-0238">DNA-binding</keyword>
<keyword id="KW-0371">Homeobox</keyword>
<keyword id="KW-0539">Nucleus</keyword>
<name>DLX3_PLEWA</name>
<protein>
    <recommendedName>
        <fullName>Distal-less-like protein DLX-3</fullName>
    </recommendedName>
</protein>
<reference key="1">
    <citation type="journal article" date="1996" name="Mech. Dev.">
        <title>A Distal-less-like gene is induced in the regenerating central nervous system of the urodele Pleurodeles waltl.</title>
        <authorList>
            <person name="Nicolas S."/>
            <person name="Massacrier A."/>
            <person name="Caubit X."/>
            <person name="Cau P."/>
            <person name="le Parco Y."/>
        </authorList>
    </citation>
    <scope>NUCLEOTIDE SEQUENCE [MRNA]</scope>
</reference>
<gene>
    <name type="primary">DLX3</name>
</gene>
<accession>Q91284</accession>
<evidence type="ECO:0000255" key="1">
    <source>
        <dbReference type="PROSITE-ProRule" id="PRU00108"/>
    </source>
</evidence>
<evidence type="ECO:0000256" key="2">
    <source>
        <dbReference type="SAM" id="MobiDB-lite"/>
    </source>
</evidence>
<evidence type="ECO:0000305" key="3"/>
<organism>
    <name type="scientific">Pleurodeles waltl</name>
    <name type="common">Iberian ribbed newt</name>
    <dbReference type="NCBI Taxonomy" id="8319"/>
    <lineage>
        <taxon>Eukaryota</taxon>
        <taxon>Metazoa</taxon>
        <taxon>Chordata</taxon>
        <taxon>Craniata</taxon>
        <taxon>Vertebrata</taxon>
        <taxon>Euteleostomi</taxon>
        <taxon>Amphibia</taxon>
        <taxon>Batrachia</taxon>
        <taxon>Caudata</taxon>
        <taxon>Salamandroidea</taxon>
        <taxon>Salamandridae</taxon>
        <taxon>Pleurodelinae</taxon>
        <taxon>Pleurodeles</taxon>
    </lineage>
</organism>